<evidence type="ECO:0000250" key="1"/>
<evidence type="ECO:0000255" key="2">
    <source>
        <dbReference type="PROSITE-ProRule" id="PRU00194"/>
    </source>
</evidence>
<evidence type="ECO:0000305" key="3"/>
<protein>
    <recommendedName>
        <fullName>Ankyrin repeat and SOCS box protein 15</fullName>
        <shortName>ASB-15</shortName>
    </recommendedName>
</protein>
<proteinExistence type="evidence at protein level"/>
<name>ASB15_MOUSE</name>
<gene>
    <name type="primary">Asb15</name>
</gene>
<sequence length="583" mass="65512">MDINDDSNDDHLASYDIQLCIQESIEASQAIFHPKRLVQLSDQNRKLVEAIRQGRIFELQEYVQYKYALEEADEKGWFPLHEAVVQPIQQILETVLDASYKTLWEFKTCDGETPLTLAVKAGLVENVKTLLDKGVWPNTKNDKGETPLLIAIKRGSYDMVSALIKYNTSLDQPCVKRWSAMHEAAKQGRKDIITLLLNHRGNVHLRDGFGVTPLGVAAEYGHCDVLEHLIHKGGDVFALADDGASVLFEAAGGGNPDCISLLLKYGGSGNVPNRAGHLPIHRAAYEGHYLALKYLIPVTSKHAIQKSGLTPIHSAAEGQNAQCLELLIENGFDVNALLADHISQSYDDERKTALYFAVSNNDIHCTEVLLAAGADPNLDPLNCLLVAVRANRHEIVRLLLSYGANVNCYFMHVNDTRFPSAIQYALNDEIMLRLLLNNGYQVELCFDCMHGNIFGNSFVWSETEEEGLPGWTSCIIKDNPFCEFITVPWMKHLVGGIVRILIDYMDYVPLCAKLKSVLEVQREWPEIRQIIENPCSLKHLCRLKIRRVMGLQRLCQPASIQMLPLPAAMRRYLLFKEFDLYGQ</sequence>
<comment type="function">
    <text evidence="1">May be a substrate-recognition component of a SCF-like ECS (Elongin-Cullin-SOCS-box protein) E3 ubiquitin-protein ligase complex which mediates the ubiquitination and subsequent proteasomal degradation of target proteins.</text>
</comment>
<comment type="pathway">
    <text>Protein modification; protein ubiquitination.</text>
</comment>
<comment type="interaction">
    <interactant intactId="EBI-26675998">
        <id>Q8VHS6</id>
    </interactant>
    <interactant intactId="EBI-26675915">
        <id>Q80W03</id>
        <label>Tox3</label>
    </interactant>
    <organismsDiffer>false</organismsDiffer>
    <experiments>2</experiments>
</comment>
<comment type="domain">
    <text evidence="1">The SOCS box domain mediates the interaction with the Elongin BC complex, an adapter module in different E3 ubiquitin-protein ligase complexes.</text>
</comment>
<comment type="similarity">
    <text evidence="3">Belongs to the ankyrin SOCS box (ASB) family.</text>
</comment>
<keyword id="KW-0040">ANK repeat</keyword>
<keyword id="KW-1185">Reference proteome</keyword>
<keyword id="KW-0677">Repeat</keyword>
<keyword id="KW-0833">Ubl conjugation pathway</keyword>
<feature type="chain" id="PRO_0000066955" description="Ankyrin repeat and SOCS box protein 15">
    <location>
        <begin position="1"/>
        <end position="583"/>
    </location>
</feature>
<feature type="repeat" description="ANK 1">
    <location>
        <begin position="75"/>
        <end position="104"/>
    </location>
</feature>
<feature type="repeat" description="ANK 2">
    <location>
        <begin position="110"/>
        <end position="139"/>
    </location>
</feature>
<feature type="repeat" description="ANK 3">
    <location>
        <begin position="143"/>
        <end position="172"/>
    </location>
</feature>
<feature type="repeat" description="ANK 4">
    <location>
        <begin position="176"/>
        <end position="205"/>
    </location>
</feature>
<feature type="repeat" description="ANK 5">
    <location>
        <begin position="209"/>
        <end position="238"/>
    </location>
</feature>
<feature type="repeat" description="ANK 6">
    <location>
        <begin position="242"/>
        <end position="271"/>
    </location>
</feature>
<feature type="repeat" description="ANK 7">
    <location>
        <begin position="275"/>
        <end position="304"/>
    </location>
</feature>
<feature type="repeat" description="ANK 8">
    <location>
        <begin position="307"/>
        <end position="336"/>
    </location>
</feature>
<feature type="repeat" description="ANK 9">
    <location>
        <begin position="349"/>
        <end position="378"/>
    </location>
</feature>
<feature type="repeat" description="ANK 10">
    <location>
        <begin position="379"/>
        <end position="408"/>
    </location>
</feature>
<feature type="repeat" description="ANK 11">
    <location>
        <begin position="416"/>
        <end position="444"/>
    </location>
</feature>
<feature type="domain" description="SOCS box" evidence="2">
    <location>
        <begin position="524"/>
        <end position="579"/>
    </location>
</feature>
<feature type="sequence conflict" description="In Ref. 1; AAL57362." evidence="3" ref="1">
    <original>N</original>
    <variation>K</variation>
    <location>
        <position position="335"/>
    </location>
</feature>
<dbReference type="EMBL" id="AF403043">
    <property type="protein sequence ID" value="AAL57362.1"/>
    <property type="molecule type" value="mRNA"/>
</dbReference>
<dbReference type="EMBL" id="AK029759">
    <property type="protein sequence ID" value="BAC26602.1"/>
    <property type="molecule type" value="mRNA"/>
</dbReference>
<dbReference type="EMBL" id="AC153635">
    <property type="status" value="NOT_ANNOTATED_CDS"/>
    <property type="molecule type" value="Genomic_DNA"/>
</dbReference>
<dbReference type="EMBL" id="CH466533">
    <property type="protein sequence ID" value="EDL13821.1"/>
    <property type="molecule type" value="Genomic_DNA"/>
</dbReference>
<dbReference type="EMBL" id="BC050794">
    <property type="protein sequence ID" value="AAH50794.1"/>
    <property type="molecule type" value="mRNA"/>
</dbReference>
<dbReference type="CCDS" id="CCDS19943.1"/>
<dbReference type="RefSeq" id="NP_543123.2">
    <property type="nucleotide sequence ID" value="NM_080847.3"/>
</dbReference>
<dbReference type="RefSeq" id="XP_011239391.1">
    <property type="nucleotide sequence ID" value="XM_011241089.3"/>
</dbReference>
<dbReference type="SMR" id="Q8VHS6"/>
<dbReference type="BioGRID" id="219698">
    <property type="interactions" value="4"/>
</dbReference>
<dbReference type="FunCoup" id="Q8VHS6">
    <property type="interactions" value="14"/>
</dbReference>
<dbReference type="IntAct" id="Q8VHS6">
    <property type="interactions" value="4"/>
</dbReference>
<dbReference type="STRING" id="10090.ENSMUSP00000112965"/>
<dbReference type="iPTMnet" id="Q8VHS6"/>
<dbReference type="PhosphoSitePlus" id="Q8VHS6"/>
<dbReference type="PaxDb" id="10090-ENSMUSP00000031696"/>
<dbReference type="ProteomicsDB" id="265115"/>
<dbReference type="Antibodypedia" id="31758">
    <property type="antibodies" value="6 antibodies from 5 providers"/>
</dbReference>
<dbReference type="DNASU" id="78910"/>
<dbReference type="Ensembl" id="ENSMUST00000031696.10">
    <property type="protein sequence ID" value="ENSMUSP00000031696.4"/>
    <property type="gene ID" value="ENSMUSG00000029685.16"/>
</dbReference>
<dbReference type="Ensembl" id="ENSMUST00000117688.2">
    <property type="protein sequence ID" value="ENSMUSP00000112965.2"/>
    <property type="gene ID" value="ENSMUSG00000029685.16"/>
</dbReference>
<dbReference type="GeneID" id="78910"/>
<dbReference type="KEGG" id="mmu:78910"/>
<dbReference type="UCSC" id="uc009bbt.2">
    <property type="organism name" value="mouse"/>
</dbReference>
<dbReference type="AGR" id="MGI:1926160"/>
<dbReference type="CTD" id="142685"/>
<dbReference type="MGI" id="MGI:1926160">
    <property type="gene designation" value="Asb15"/>
</dbReference>
<dbReference type="VEuPathDB" id="HostDB:ENSMUSG00000029685"/>
<dbReference type="eggNOG" id="KOG0504">
    <property type="taxonomic scope" value="Eukaryota"/>
</dbReference>
<dbReference type="GeneTree" id="ENSGT00940000157073"/>
<dbReference type="HOGENOM" id="CLU_023739_1_0_1"/>
<dbReference type="InParanoid" id="Q8VHS6"/>
<dbReference type="OMA" id="HVNDTHF"/>
<dbReference type="OrthoDB" id="20872at2759"/>
<dbReference type="PhylomeDB" id="Q8VHS6"/>
<dbReference type="TreeFam" id="TF315127"/>
<dbReference type="UniPathway" id="UPA00143"/>
<dbReference type="BioGRID-ORCS" id="78910">
    <property type="hits" value="4 hits in 78 CRISPR screens"/>
</dbReference>
<dbReference type="PRO" id="PR:Q8VHS6"/>
<dbReference type="Proteomes" id="UP000000589">
    <property type="component" value="Chromosome 6"/>
</dbReference>
<dbReference type="RNAct" id="Q8VHS6">
    <property type="molecule type" value="protein"/>
</dbReference>
<dbReference type="Bgee" id="ENSMUSG00000029685">
    <property type="expression patterns" value="Expressed in myocardium of ventricle and 60 other cell types or tissues"/>
</dbReference>
<dbReference type="GO" id="GO:0035556">
    <property type="term" value="P:intracellular signal transduction"/>
    <property type="evidence" value="ECO:0007669"/>
    <property type="project" value="InterPro"/>
</dbReference>
<dbReference type="GO" id="GO:0016567">
    <property type="term" value="P:protein ubiquitination"/>
    <property type="evidence" value="ECO:0007669"/>
    <property type="project" value="UniProtKB-UniPathway"/>
</dbReference>
<dbReference type="FunFam" id="1.10.750.20:FF:000001">
    <property type="entry name" value="Ankyrin repeat and SOCS box containing 1"/>
    <property type="match status" value="1"/>
</dbReference>
<dbReference type="Gene3D" id="1.25.40.20">
    <property type="entry name" value="Ankyrin repeat-containing domain"/>
    <property type="match status" value="2"/>
</dbReference>
<dbReference type="Gene3D" id="1.10.750.20">
    <property type="entry name" value="SOCS box"/>
    <property type="match status" value="1"/>
</dbReference>
<dbReference type="InterPro" id="IPR002110">
    <property type="entry name" value="Ankyrin_rpt"/>
</dbReference>
<dbReference type="InterPro" id="IPR036770">
    <property type="entry name" value="Ankyrin_rpt-contain_sf"/>
</dbReference>
<dbReference type="InterPro" id="IPR001496">
    <property type="entry name" value="SOCS_box"/>
</dbReference>
<dbReference type="InterPro" id="IPR036036">
    <property type="entry name" value="SOCS_box-like_dom_sf"/>
</dbReference>
<dbReference type="PANTHER" id="PTHR24198">
    <property type="entry name" value="ANKYRIN REPEAT AND PROTEIN KINASE DOMAIN-CONTAINING PROTEIN"/>
    <property type="match status" value="1"/>
</dbReference>
<dbReference type="PANTHER" id="PTHR24198:SF187">
    <property type="entry name" value="ANKYRIN REPEAT AND SOCS BOX CONTAINING 15"/>
    <property type="match status" value="1"/>
</dbReference>
<dbReference type="Pfam" id="PF00023">
    <property type="entry name" value="Ank"/>
    <property type="match status" value="1"/>
</dbReference>
<dbReference type="Pfam" id="PF12796">
    <property type="entry name" value="Ank_2"/>
    <property type="match status" value="3"/>
</dbReference>
<dbReference type="Pfam" id="PF07525">
    <property type="entry name" value="SOCS_box"/>
    <property type="match status" value="1"/>
</dbReference>
<dbReference type="PRINTS" id="PR01415">
    <property type="entry name" value="ANKYRIN"/>
</dbReference>
<dbReference type="SMART" id="SM00248">
    <property type="entry name" value="ANK"/>
    <property type="match status" value="10"/>
</dbReference>
<dbReference type="SMART" id="SM00253">
    <property type="entry name" value="SOCS"/>
    <property type="match status" value="1"/>
</dbReference>
<dbReference type="SMART" id="SM00969">
    <property type="entry name" value="SOCS_box"/>
    <property type="match status" value="1"/>
</dbReference>
<dbReference type="SUPFAM" id="SSF48403">
    <property type="entry name" value="Ankyrin repeat"/>
    <property type="match status" value="1"/>
</dbReference>
<dbReference type="SUPFAM" id="SSF158235">
    <property type="entry name" value="SOCS box-like"/>
    <property type="match status" value="1"/>
</dbReference>
<dbReference type="PROSITE" id="PS50297">
    <property type="entry name" value="ANK_REP_REGION"/>
    <property type="match status" value="1"/>
</dbReference>
<dbReference type="PROSITE" id="PS50088">
    <property type="entry name" value="ANK_REPEAT"/>
    <property type="match status" value="8"/>
</dbReference>
<dbReference type="PROSITE" id="PS50225">
    <property type="entry name" value="SOCS"/>
    <property type="match status" value="1"/>
</dbReference>
<reference key="1">
    <citation type="submission" date="2001-07" db="EMBL/GenBank/DDBJ databases">
        <title>SOCS box proteins.</title>
        <authorList>
            <person name="Kile B.T."/>
            <person name="Nicola N.A."/>
        </authorList>
    </citation>
    <scope>NUCLEOTIDE SEQUENCE [MRNA]</scope>
</reference>
<reference key="2">
    <citation type="journal article" date="2005" name="Science">
        <title>The transcriptional landscape of the mammalian genome.</title>
        <authorList>
            <person name="Carninci P."/>
            <person name="Kasukawa T."/>
            <person name="Katayama S."/>
            <person name="Gough J."/>
            <person name="Frith M.C."/>
            <person name="Maeda N."/>
            <person name="Oyama R."/>
            <person name="Ravasi T."/>
            <person name="Lenhard B."/>
            <person name="Wells C."/>
            <person name="Kodzius R."/>
            <person name="Shimokawa K."/>
            <person name="Bajic V.B."/>
            <person name="Brenner S.E."/>
            <person name="Batalov S."/>
            <person name="Forrest A.R."/>
            <person name="Zavolan M."/>
            <person name="Davis M.J."/>
            <person name="Wilming L.G."/>
            <person name="Aidinis V."/>
            <person name="Allen J.E."/>
            <person name="Ambesi-Impiombato A."/>
            <person name="Apweiler R."/>
            <person name="Aturaliya R.N."/>
            <person name="Bailey T.L."/>
            <person name="Bansal M."/>
            <person name="Baxter L."/>
            <person name="Beisel K.W."/>
            <person name="Bersano T."/>
            <person name="Bono H."/>
            <person name="Chalk A.M."/>
            <person name="Chiu K.P."/>
            <person name="Choudhary V."/>
            <person name="Christoffels A."/>
            <person name="Clutterbuck D.R."/>
            <person name="Crowe M.L."/>
            <person name="Dalla E."/>
            <person name="Dalrymple B.P."/>
            <person name="de Bono B."/>
            <person name="Della Gatta G."/>
            <person name="di Bernardo D."/>
            <person name="Down T."/>
            <person name="Engstrom P."/>
            <person name="Fagiolini M."/>
            <person name="Faulkner G."/>
            <person name="Fletcher C.F."/>
            <person name="Fukushima T."/>
            <person name="Furuno M."/>
            <person name="Futaki S."/>
            <person name="Gariboldi M."/>
            <person name="Georgii-Hemming P."/>
            <person name="Gingeras T.R."/>
            <person name="Gojobori T."/>
            <person name="Green R.E."/>
            <person name="Gustincich S."/>
            <person name="Harbers M."/>
            <person name="Hayashi Y."/>
            <person name="Hensch T.K."/>
            <person name="Hirokawa N."/>
            <person name="Hill D."/>
            <person name="Huminiecki L."/>
            <person name="Iacono M."/>
            <person name="Ikeo K."/>
            <person name="Iwama A."/>
            <person name="Ishikawa T."/>
            <person name="Jakt M."/>
            <person name="Kanapin A."/>
            <person name="Katoh M."/>
            <person name="Kawasawa Y."/>
            <person name="Kelso J."/>
            <person name="Kitamura H."/>
            <person name="Kitano H."/>
            <person name="Kollias G."/>
            <person name="Krishnan S.P."/>
            <person name="Kruger A."/>
            <person name="Kummerfeld S.K."/>
            <person name="Kurochkin I.V."/>
            <person name="Lareau L.F."/>
            <person name="Lazarevic D."/>
            <person name="Lipovich L."/>
            <person name="Liu J."/>
            <person name="Liuni S."/>
            <person name="McWilliam S."/>
            <person name="Madan Babu M."/>
            <person name="Madera M."/>
            <person name="Marchionni L."/>
            <person name="Matsuda H."/>
            <person name="Matsuzawa S."/>
            <person name="Miki H."/>
            <person name="Mignone F."/>
            <person name="Miyake S."/>
            <person name="Morris K."/>
            <person name="Mottagui-Tabar S."/>
            <person name="Mulder N."/>
            <person name="Nakano N."/>
            <person name="Nakauchi H."/>
            <person name="Ng P."/>
            <person name="Nilsson R."/>
            <person name="Nishiguchi S."/>
            <person name="Nishikawa S."/>
            <person name="Nori F."/>
            <person name="Ohara O."/>
            <person name="Okazaki Y."/>
            <person name="Orlando V."/>
            <person name="Pang K.C."/>
            <person name="Pavan W.J."/>
            <person name="Pavesi G."/>
            <person name="Pesole G."/>
            <person name="Petrovsky N."/>
            <person name="Piazza S."/>
            <person name="Reed J."/>
            <person name="Reid J.F."/>
            <person name="Ring B.Z."/>
            <person name="Ringwald M."/>
            <person name="Rost B."/>
            <person name="Ruan Y."/>
            <person name="Salzberg S.L."/>
            <person name="Sandelin A."/>
            <person name="Schneider C."/>
            <person name="Schoenbach C."/>
            <person name="Sekiguchi K."/>
            <person name="Semple C.A."/>
            <person name="Seno S."/>
            <person name="Sessa L."/>
            <person name="Sheng Y."/>
            <person name="Shibata Y."/>
            <person name="Shimada H."/>
            <person name="Shimada K."/>
            <person name="Silva D."/>
            <person name="Sinclair B."/>
            <person name="Sperling S."/>
            <person name="Stupka E."/>
            <person name="Sugiura K."/>
            <person name="Sultana R."/>
            <person name="Takenaka Y."/>
            <person name="Taki K."/>
            <person name="Tammoja K."/>
            <person name="Tan S.L."/>
            <person name="Tang S."/>
            <person name="Taylor M.S."/>
            <person name="Tegner J."/>
            <person name="Teichmann S.A."/>
            <person name="Ueda H.R."/>
            <person name="van Nimwegen E."/>
            <person name="Verardo R."/>
            <person name="Wei C.L."/>
            <person name="Yagi K."/>
            <person name="Yamanishi H."/>
            <person name="Zabarovsky E."/>
            <person name="Zhu S."/>
            <person name="Zimmer A."/>
            <person name="Hide W."/>
            <person name="Bult C."/>
            <person name="Grimmond S.M."/>
            <person name="Teasdale R.D."/>
            <person name="Liu E.T."/>
            <person name="Brusic V."/>
            <person name="Quackenbush J."/>
            <person name="Wahlestedt C."/>
            <person name="Mattick J.S."/>
            <person name="Hume D.A."/>
            <person name="Kai C."/>
            <person name="Sasaki D."/>
            <person name="Tomaru Y."/>
            <person name="Fukuda S."/>
            <person name="Kanamori-Katayama M."/>
            <person name="Suzuki M."/>
            <person name="Aoki J."/>
            <person name="Arakawa T."/>
            <person name="Iida J."/>
            <person name="Imamura K."/>
            <person name="Itoh M."/>
            <person name="Kato T."/>
            <person name="Kawaji H."/>
            <person name="Kawagashira N."/>
            <person name="Kawashima T."/>
            <person name="Kojima M."/>
            <person name="Kondo S."/>
            <person name="Konno H."/>
            <person name="Nakano K."/>
            <person name="Ninomiya N."/>
            <person name="Nishio T."/>
            <person name="Okada M."/>
            <person name="Plessy C."/>
            <person name="Shibata K."/>
            <person name="Shiraki T."/>
            <person name="Suzuki S."/>
            <person name="Tagami M."/>
            <person name="Waki K."/>
            <person name="Watahiki A."/>
            <person name="Okamura-Oho Y."/>
            <person name="Suzuki H."/>
            <person name="Kawai J."/>
            <person name="Hayashizaki Y."/>
        </authorList>
    </citation>
    <scope>NUCLEOTIDE SEQUENCE [LARGE SCALE MRNA]</scope>
    <source>
        <strain>C57BL/6J</strain>
        <tissue>Testis</tissue>
    </source>
</reference>
<reference key="3">
    <citation type="journal article" date="2009" name="PLoS Biol.">
        <title>Lineage-specific biology revealed by a finished genome assembly of the mouse.</title>
        <authorList>
            <person name="Church D.M."/>
            <person name="Goodstadt L."/>
            <person name="Hillier L.W."/>
            <person name="Zody M.C."/>
            <person name="Goldstein S."/>
            <person name="She X."/>
            <person name="Bult C.J."/>
            <person name="Agarwala R."/>
            <person name="Cherry J.L."/>
            <person name="DiCuccio M."/>
            <person name="Hlavina W."/>
            <person name="Kapustin Y."/>
            <person name="Meric P."/>
            <person name="Maglott D."/>
            <person name="Birtle Z."/>
            <person name="Marques A.C."/>
            <person name="Graves T."/>
            <person name="Zhou S."/>
            <person name="Teague B."/>
            <person name="Potamousis K."/>
            <person name="Churas C."/>
            <person name="Place M."/>
            <person name="Herschleb J."/>
            <person name="Runnheim R."/>
            <person name="Forrest D."/>
            <person name="Amos-Landgraf J."/>
            <person name="Schwartz D.C."/>
            <person name="Cheng Z."/>
            <person name="Lindblad-Toh K."/>
            <person name="Eichler E.E."/>
            <person name="Ponting C.P."/>
        </authorList>
    </citation>
    <scope>NUCLEOTIDE SEQUENCE [LARGE SCALE GENOMIC DNA]</scope>
    <source>
        <strain>C57BL/6J</strain>
    </source>
</reference>
<reference key="4">
    <citation type="submission" date="2005-09" db="EMBL/GenBank/DDBJ databases">
        <authorList>
            <person name="Mural R.J."/>
            <person name="Adams M.D."/>
            <person name="Myers E.W."/>
            <person name="Smith H.O."/>
            <person name="Venter J.C."/>
        </authorList>
    </citation>
    <scope>NUCLEOTIDE SEQUENCE [LARGE SCALE GENOMIC DNA]</scope>
</reference>
<reference key="5">
    <citation type="journal article" date="2004" name="Genome Res.">
        <title>The status, quality, and expansion of the NIH full-length cDNA project: the Mammalian Gene Collection (MGC).</title>
        <authorList>
            <consortium name="The MGC Project Team"/>
        </authorList>
    </citation>
    <scope>NUCLEOTIDE SEQUENCE [LARGE SCALE MRNA]</scope>
    <source>
        <tissue>Testis</tissue>
    </source>
</reference>
<organism>
    <name type="scientific">Mus musculus</name>
    <name type="common">Mouse</name>
    <dbReference type="NCBI Taxonomy" id="10090"/>
    <lineage>
        <taxon>Eukaryota</taxon>
        <taxon>Metazoa</taxon>
        <taxon>Chordata</taxon>
        <taxon>Craniata</taxon>
        <taxon>Vertebrata</taxon>
        <taxon>Euteleostomi</taxon>
        <taxon>Mammalia</taxon>
        <taxon>Eutheria</taxon>
        <taxon>Euarchontoglires</taxon>
        <taxon>Glires</taxon>
        <taxon>Rodentia</taxon>
        <taxon>Myomorpha</taxon>
        <taxon>Muroidea</taxon>
        <taxon>Muridae</taxon>
        <taxon>Murinae</taxon>
        <taxon>Mus</taxon>
        <taxon>Mus</taxon>
    </lineage>
</organism>
<accession>Q8VHS6</accession>
<accession>Q8CDP8</accession>